<sequence length="184" mass="20798">MLGPPVNLPKWLEENSHLLKPPINNYCVYNDDFTVMIVGGPNARTDYHINQTPEWFYQYKGAMMLKVVDDGVFRDIIIREGDMFLLPGNTPHNPVRFADTVGVVLEQRRPEGSIDRMRWYCQNPDCTPGQVVHEASFHCTDLGTQIKAGVESFKTDESLRKCGKCGELADWCPKPGSILDPNKA</sequence>
<accession>A4REV8</accession>
<accession>G4NBG0</accession>
<name>3HAO_PYRO7</name>
<dbReference type="EC" id="1.13.11.6" evidence="1"/>
<dbReference type="EMBL" id="CM001235">
    <property type="protein sequence ID" value="EHA48917.1"/>
    <property type="molecule type" value="Genomic_DNA"/>
</dbReference>
<dbReference type="RefSeq" id="XP_003718501.1">
    <property type="nucleotide sequence ID" value="XM_003718453.1"/>
</dbReference>
<dbReference type="SMR" id="A4REV8"/>
<dbReference type="FunCoup" id="A4REV8">
    <property type="interactions" value="138"/>
</dbReference>
<dbReference type="STRING" id="242507.A4REV8"/>
<dbReference type="EnsemblFungi" id="MGG_00549T0">
    <property type="protein sequence ID" value="MGG_00549T0"/>
    <property type="gene ID" value="MGG_00549"/>
</dbReference>
<dbReference type="GeneID" id="2674643"/>
<dbReference type="KEGG" id="mgr:MGG_00549"/>
<dbReference type="VEuPathDB" id="FungiDB:MGG_00549"/>
<dbReference type="eggNOG" id="KOG3995">
    <property type="taxonomic scope" value="Eukaryota"/>
</dbReference>
<dbReference type="HOGENOM" id="CLU_095765_0_0_1"/>
<dbReference type="InParanoid" id="A4REV8"/>
<dbReference type="OMA" id="KPPVGNQ"/>
<dbReference type="OrthoDB" id="204928at2759"/>
<dbReference type="UniPathway" id="UPA00253">
    <property type="reaction ID" value="UER00330"/>
</dbReference>
<dbReference type="Proteomes" id="UP000009058">
    <property type="component" value="Chromosome 5"/>
</dbReference>
<dbReference type="GO" id="GO:0005737">
    <property type="term" value="C:cytoplasm"/>
    <property type="evidence" value="ECO:0007669"/>
    <property type="project" value="UniProtKB-SubCell"/>
</dbReference>
<dbReference type="GO" id="GO:0000334">
    <property type="term" value="F:3-hydroxyanthranilate 3,4-dioxygenase activity"/>
    <property type="evidence" value="ECO:0007669"/>
    <property type="project" value="UniProtKB-UniRule"/>
</dbReference>
<dbReference type="GO" id="GO:0008198">
    <property type="term" value="F:ferrous iron binding"/>
    <property type="evidence" value="ECO:0007669"/>
    <property type="project" value="UniProtKB-UniRule"/>
</dbReference>
<dbReference type="GO" id="GO:0034354">
    <property type="term" value="P:'de novo' NAD biosynthetic process from L-tryptophan"/>
    <property type="evidence" value="ECO:0007669"/>
    <property type="project" value="UniProtKB-UniRule"/>
</dbReference>
<dbReference type="GO" id="GO:0043420">
    <property type="term" value="P:anthranilate metabolic process"/>
    <property type="evidence" value="ECO:0007669"/>
    <property type="project" value="UniProtKB-UniRule"/>
</dbReference>
<dbReference type="GO" id="GO:0006569">
    <property type="term" value="P:L-tryptophan catabolic process"/>
    <property type="evidence" value="ECO:0007669"/>
    <property type="project" value="UniProtKB-UniRule"/>
</dbReference>
<dbReference type="GO" id="GO:0019805">
    <property type="term" value="P:quinolinate biosynthetic process"/>
    <property type="evidence" value="ECO:0007669"/>
    <property type="project" value="UniProtKB-UniRule"/>
</dbReference>
<dbReference type="CDD" id="cd06123">
    <property type="entry name" value="cupin_HAO"/>
    <property type="match status" value="1"/>
</dbReference>
<dbReference type="FunFam" id="2.60.120.10:FF:000093">
    <property type="entry name" value="3-hydroxyanthranilate 3,4-dioxygenase"/>
    <property type="match status" value="1"/>
</dbReference>
<dbReference type="Gene3D" id="2.60.120.10">
    <property type="entry name" value="Jelly Rolls"/>
    <property type="match status" value="1"/>
</dbReference>
<dbReference type="HAMAP" id="MF_00825">
    <property type="entry name" value="3_HAO"/>
    <property type="match status" value="1"/>
</dbReference>
<dbReference type="InterPro" id="IPR010329">
    <property type="entry name" value="3hydroanth_dOase"/>
</dbReference>
<dbReference type="InterPro" id="IPR014710">
    <property type="entry name" value="RmlC-like_jellyroll"/>
</dbReference>
<dbReference type="InterPro" id="IPR011051">
    <property type="entry name" value="RmlC_Cupin_sf"/>
</dbReference>
<dbReference type="NCBIfam" id="TIGR03037">
    <property type="entry name" value="anthran_nbaC"/>
    <property type="match status" value="1"/>
</dbReference>
<dbReference type="PANTHER" id="PTHR15497">
    <property type="entry name" value="3-HYDROXYANTHRANILATE 3,4-DIOXYGENASE"/>
    <property type="match status" value="1"/>
</dbReference>
<dbReference type="PANTHER" id="PTHR15497:SF1">
    <property type="entry name" value="3-HYDROXYANTHRANILATE 3,4-DIOXYGENASE"/>
    <property type="match status" value="1"/>
</dbReference>
<dbReference type="Pfam" id="PF06052">
    <property type="entry name" value="3-HAO"/>
    <property type="match status" value="1"/>
</dbReference>
<dbReference type="SUPFAM" id="SSF51182">
    <property type="entry name" value="RmlC-like cupins"/>
    <property type="match status" value="1"/>
</dbReference>
<protein>
    <recommendedName>
        <fullName evidence="1">3-hydroxyanthranilate 3,4-dioxygenase</fullName>
        <ecNumber evidence="1">1.13.11.6</ecNumber>
    </recommendedName>
    <alternativeName>
        <fullName evidence="1">3-hydroxyanthranilate oxygenase</fullName>
        <shortName evidence="1">3-HAO</shortName>
    </alternativeName>
    <alternativeName>
        <fullName evidence="1">3-hydroxyanthranilic acid dioxygenase</fullName>
        <shortName evidence="1">HAD</shortName>
    </alternativeName>
    <alternativeName>
        <fullName evidence="1">Biosynthesis of nicotinic acid protein 1</fullName>
    </alternativeName>
</protein>
<evidence type="ECO:0000255" key="1">
    <source>
        <dbReference type="HAMAP-Rule" id="MF_03019"/>
    </source>
</evidence>
<proteinExistence type="inferred from homology"/>
<feature type="chain" id="PRO_0000361989" description="3-hydroxyanthranilate 3,4-dioxygenase">
    <location>
        <begin position="1"/>
        <end position="184"/>
    </location>
</feature>
<feature type="binding site" evidence="1">
    <location>
        <position position="44"/>
    </location>
    <ligand>
        <name>O2</name>
        <dbReference type="ChEBI" id="CHEBI:15379"/>
    </ligand>
</feature>
<feature type="binding site" evidence="1">
    <location>
        <position position="48"/>
    </location>
    <ligand>
        <name>Fe cation</name>
        <dbReference type="ChEBI" id="CHEBI:24875"/>
        <note>catalytic</note>
    </ligand>
</feature>
<feature type="binding site" evidence="1">
    <location>
        <position position="54"/>
    </location>
    <ligand>
        <name>Fe cation</name>
        <dbReference type="ChEBI" id="CHEBI:24875"/>
        <note>catalytic</note>
    </ligand>
</feature>
<feature type="binding site" evidence="1">
    <location>
        <position position="54"/>
    </location>
    <ligand>
        <name>substrate</name>
    </ligand>
</feature>
<feature type="binding site" evidence="1">
    <location>
        <position position="92"/>
    </location>
    <ligand>
        <name>Fe cation</name>
        <dbReference type="ChEBI" id="CHEBI:24875"/>
        <note>catalytic</note>
    </ligand>
</feature>
<feature type="binding site" evidence="1">
    <location>
        <position position="96"/>
    </location>
    <ligand>
        <name>substrate</name>
    </ligand>
</feature>
<feature type="binding site" evidence="1">
    <location>
        <position position="106"/>
    </location>
    <ligand>
        <name>substrate</name>
    </ligand>
</feature>
<feature type="binding site" evidence="1">
    <location>
        <position position="121"/>
    </location>
    <ligand>
        <name>a divalent metal cation</name>
        <dbReference type="ChEBI" id="CHEBI:60240"/>
    </ligand>
</feature>
<feature type="binding site" evidence="1">
    <location>
        <position position="126"/>
    </location>
    <ligand>
        <name>a divalent metal cation</name>
        <dbReference type="ChEBI" id="CHEBI:60240"/>
    </ligand>
</feature>
<feature type="binding site" evidence="1">
    <location>
        <position position="162"/>
    </location>
    <ligand>
        <name>a divalent metal cation</name>
        <dbReference type="ChEBI" id="CHEBI:60240"/>
    </ligand>
</feature>
<feature type="binding site" evidence="1">
    <location>
        <position position="165"/>
    </location>
    <ligand>
        <name>a divalent metal cation</name>
        <dbReference type="ChEBI" id="CHEBI:60240"/>
    </ligand>
</feature>
<organism>
    <name type="scientific">Pyricularia oryzae (strain 70-15 / ATCC MYA-4617 / FGSC 8958)</name>
    <name type="common">Rice blast fungus</name>
    <name type="synonym">Magnaporthe oryzae</name>
    <dbReference type="NCBI Taxonomy" id="242507"/>
    <lineage>
        <taxon>Eukaryota</taxon>
        <taxon>Fungi</taxon>
        <taxon>Dikarya</taxon>
        <taxon>Ascomycota</taxon>
        <taxon>Pezizomycotina</taxon>
        <taxon>Sordariomycetes</taxon>
        <taxon>Sordariomycetidae</taxon>
        <taxon>Magnaporthales</taxon>
        <taxon>Pyriculariaceae</taxon>
        <taxon>Pyricularia</taxon>
    </lineage>
</organism>
<comment type="function">
    <text evidence="1">Catalyzes the oxidative ring opening of 3-hydroxyanthranilate to 2-amino-3-carboxymuconate semialdehyde, which spontaneously cyclizes to quinolinate.</text>
</comment>
<comment type="catalytic activity">
    <reaction evidence="1">
        <text>3-hydroxyanthranilate + O2 = (2Z,4Z)-2-amino-3-carboxymuconate 6-semialdehyde</text>
        <dbReference type="Rhea" id="RHEA:17953"/>
        <dbReference type="ChEBI" id="CHEBI:15379"/>
        <dbReference type="ChEBI" id="CHEBI:36559"/>
        <dbReference type="ChEBI" id="CHEBI:77612"/>
        <dbReference type="EC" id="1.13.11.6"/>
    </reaction>
</comment>
<comment type="cofactor">
    <cofactor evidence="1">
        <name>Fe(2+)</name>
        <dbReference type="ChEBI" id="CHEBI:29033"/>
    </cofactor>
</comment>
<comment type="pathway">
    <text evidence="1">Cofactor biosynthesis; NAD(+) biosynthesis; quinolinate from L-kynurenine: step 3/3.</text>
</comment>
<comment type="subcellular location">
    <subcellularLocation>
        <location evidence="1">Cytoplasm</location>
    </subcellularLocation>
</comment>
<comment type="similarity">
    <text evidence="1">Belongs to the 3-HAO family.</text>
</comment>
<keyword id="KW-0963">Cytoplasm</keyword>
<keyword id="KW-0223">Dioxygenase</keyword>
<keyword id="KW-0408">Iron</keyword>
<keyword id="KW-0479">Metal-binding</keyword>
<keyword id="KW-0560">Oxidoreductase</keyword>
<keyword id="KW-0662">Pyridine nucleotide biosynthesis</keyword>
<keyword id="KW-1185">Reference proteome</keyword>
<reference key="1">
    <citation type="journal article" date="2005" name="Nature">
        <title>The genome sequence of the rice blast fungus Magnaporthe grisea.</title>
        <authorList>
            <person name="Dean R.A."/>
            <person name="Talbot N.J."/>
            <person name="Ebbole D.J."/>
            <person name="Farman M.L."/>
            <person name="Mitchell T.K."/>
            <person name="Orbach M.J."/>
            <person name="Thon M.R."/>
            <person name="Kulkarni R."/>
            <person name="Xu J.-R."/>
            <person name="Pan H."/>
            <person name="Read N.D."/>
            <person name="Lee Y.-H."/>
            <person name="Carbone I."/>
            <person name="Brown D."/>
            <person name="Oh Y.Y."/>
            <person name="Donofrio N."/>
            <person name="Jeong J.S."/>
            <person name="Soanes D.M."/>
            <person name="Djonovic S."/>
            <person name="Kolomiets E."/>
            <person name="Rehmeyer C."/>
            <person name="Li W."/>
            <person name="Harding M."/>
            <person name="Kim S."/>
            <person name="Lebrun M.-H."/>
            <person name="Bohnert H."/>
            <person name="Coughlan S."/>
            <person name="Butler J."/>
            <person name="Calvo S.E."/>
            <person name="Ma L.-J."/>
            <person name="Nicol R."/>
            <person name="Purcell S."/>
            <person name="Nusbaum C."/>
            <person name="Galagan J.E."/>
            <person name="Birren B.W."/>
        </authorList>
    </citation>
    <scope>NUCLEOTIDE SEQUENCE [LARGE SCALE GENOMIC DNA]</scope>
    <source>
        <strain>70-15 / ATCC MYA-4617 / FGSC 8958</strain>
    </source>
</reference>
<gene>
    <name evidence="1" type="primary">BNA1</name>
    <name type="ORF">MGG_00549</name>
</gene>